<gene>
    <name type="ordered locus">SAS1371</name>
</gene>
<name>Y1371_STAAS</name>
<protein>
    <recommendedName>
        <fullName evidence="1">Bacilliredoxin SAS1371</fullName>
    </recommendedName>
</protein>
<organism>
    <name type="scientific">Staphylococcus aureus (strain MSSA476)</name>
    <dbReference type="NCBI Taxonomy" id="282459"/>
    <lineage>
        <taxon>Bacteria</taxon>
        <taxon>Bacillati</taxon>
        <taxon>Bacillota</taxon>
        <taxon>Bacilli</taxon>
        <taxon>Bacillales</taxon>
        <taxon>Staphylococcaceae</taxon>
        <taxon>Staphylococcus</taxon>
    </lineage>
</organism>
<accession>Q6G9D3</accession>
<dbReference type="EMBL" id="BX571857">
    <property type="protein sequence ID" value="CAG43147.1"/>
    <property type="molecule type" value="Genomic_DNA"/>
</dbReference>
<dbReference type="SMR" id="Q6G9D3"/>
<dbReference type="KEGG" id="sas:SAS1371"/>
<dbReference type="HOGENOM" id="CLU_132521_0_0_9"/>
<dbReference type="GO" id="GO:0045454">
    <property type="term" value="P:cell redox homeostasis"/>
    <property type="evidence" value="ECO:0000250"/>
    <property type="project" value="UniProtKB"/>
</dbReference>
<dbReference type="Gene3D" id="3.40.30.10">
    <property type="entry name" value="Glutaredoxin"/>
    <property type="match status" value="1"/>
</dbReference>
<dbReference type="InterPro" id="IPR009474">
    <property type="entry name" value="BrxB/BrxA"/>
</dbReference>
<dbReference type="NCBIfam" id="TIGR04191">
    <property type="entry name" value="YphP_YqiW"/>
    <property type="match status" value="1"/>
</dbReference>
<dbReference type="PANTHER" id="PTHR40052:SF2">
    <property type="entry name" value="BACILLIREDOXIN BRXA"/>
    <property type="match status" value="1"/>
</dbReference>
<dbReference type="PANTHER" id="PTHR40052">
    <property type="entry name" value="UPF0403 PROTEIN YQIW-RELATED"/>
    <property type="match status" value="1"/>
</dbReference>
<dbReference type="Pfam" id="PF06491">
    <property type="entry name" value="Disulph_isomer"/>
    <property type="match status" value="1"/>
</dbReference>
<reference key="1">
    <citation type="journal article" date="2004" name="Proc. Natl. Acad. Sci. U.S.A.">
        <title>Complete genomes of two clinical Staphylococcus aureus strains: evidence for the rapid evolution of virulence and drug resistance.</title>
        <authorList>
            <person name="Holden M.T.G."/>
            <person name="Feil E.J."/>
            <person name="Lindsay J.A."/>
            <person name="Peacock S.J."/>
            <person name="Day N.P.J."/>
            <person name="Enright M.C."/>
            <person name="Foster T.J."/>
            <person name="Moore C.E."/>
            <person name="Hurst L."/>
            <person name="Atkin R."/>
            <person name="Barron A."/>
            <person name="Bason N."/>
            <person name="Bentley S.D."/>
            <person name="Chillingworth C."/>
            <person name="Chillingworth T."/>
            <person name="Churcher C."/>
            <person name="Clark L."/>
            <person name="Corton C."/>
            <person name="Cronin A."/>
            <person name="Doggett J."/>
            <person name="Dowd L."/>
            <person name="Feltwell T."/>
            <person name="Hance Z."/>
            <person name="Harris B."/>
            <person name="Hauser H."/>
            <person name="Holroyd S."/>
            <person name="Jagels K."/>
            <person name="James K.D."/>
            <person name="Lennard N."/>
            <person name="Line A."/>
            <person name="Mayes R."/>
            <person name="Moule S."/>
            <person name="Mungall K."/>
            <person name="Ormond D."/>
            <person name="Quail M.A."/>
            <person name="Rabbinowitsch E."/>
            <person name="Rutherford K.M."/>
            <person name="Sanders M."/>
            <person name="Sharp S."/>
            <person name="Simmonds M."/>
            <person name="Stevens K."/>
            <person name="Whitehead S."/>
            <person name="Barrell B.G."/>
            <person name="Spratt B.G."/>
            <person name="Parkhill J."/>
        </authorList>
    </citation>
    <scope>NUCLEOTIDE SEQUENCE [LARGE SCALE GENOMIC DNA]</scope>
    <source>
        <strain>MSSA476</strain>
    </source>
</reference>
<sequence>MNAYDAYMKEIAQQMRGELTQNGFTSLETSEAVSEYMNQVNADDTTFVVINSTCGCAAGLARPAAVAVATQNEHRPTNTVTVFAGQDKEATATMREFIQQAPSSPSYALFKGQDLVYFMPREFIEGRDINDIAMDLKDAFDENCK</sequence>
<comment type="similarity">
    <text evidence="1">Belongs to the bacilliredoxin family.</text>
</comment>
<feature type="chain" id="PRO_0000272001" description="Bacilliredoxin SAS1371">
    <location>
        <begin position="1"/>
        <end position="145"/>
    </location>
</feature>
<evidence type="ECO:0000305" key="1"/>
<proteinExistence type="inferred from homology"/>